<comment type="subcellular location">
    <subcellularLocation>
        <location evidence="2">Mitochondrion</location>
    </subcellularLocation>
</comment>
<comment type="similarity">
    <text evidence="2">Belongs to the PPR family. P subfamily.</text>
</comment>
<comment type="sequence caution" evidence="2">
    <conflict type="erroneous gene model prediction">
        <sequence resource="EMBL-CDS" id="AAF19688"/>
    </conflict>
    <text>The predicted gene has been split into 2 genes: At1g64580 and At1g64583.</text>
</comment>
<comment type="online information" name="Pentatricopeptide repeat proteins">
    <link uri="https://ppr.plantenergy.uwa.edu.au"/>
</comment>
<gene>
    <name type="ordered locus">At1g64583</name>
    <name type="ORF">F1N19.15</name>
</gene>
<evidence type="ECO:0000255" key="1"/>
<evidence type="ECO:0000305" key="2"/>
<feature type="transit peptide" description="Mitochondrion" evidence="1">
    <location>
        <begin position="1"/>
        <end position="34"/>
    </location>
</feature>
<feature type="chain" id="PRO_0000342847" description="Pentatricopeptide repeat-containing protein At1g64583, mitochondrial">
    <location>
        <begin position="35"/>
        <end position="512"/>
    </location>
</feature>
<feature type="repeat" description="PPR 1">
    <location>
        <begin position="70"/>
        <end position="104"/>
    </location>
</feature>
<feature type="repeat" description="PPR 2">
    <location>
        <begin position="105"/>
        <end position="139"/>
    </location>
</feature>
<feature type="repeat" description="PPR 3">
    <location>
        <begin position="140"/>
        <end position="174"/>
    </location>
</feature>
<feature type="repeat" description="PPR 4">
    <location>
        <begin position="175"/>
        <end position="209"/>
    </location>
</feature>
<feature type="repeat" description="PPR 5">
    <location>
        <begin position="210"/>
        <end position="244"/>
    </location>
</feature>
<feature type="repeat" description="PPR 6">
    <location>
        <begin position="245"/>
        <end position="279"/>
    </location>
</feature>
<feature type="repeat" description="PPR 7">
    <location>
        <begin position="280"/>
        <end position="314"/>
    </location>
</feature>
<feature type="repeat" description="PPR 8">
    <location>
        <begin position="315"/>
        <end position="349"/>
    </location>
</feature>
<feature type="repeat" description="PPR 9">
    <location>
        <begin position="350"/>
        <end position="384"/>
    </location>
</feature>
<feature type="repeat" description="PPR 10">
    <location>
        <begin position="385"/>
        <end position="415"/>
    </location>
</feature>
<feature type="repeat" description="PPR 11">
    <location>
        <begin position="420"/>
        <end position="454"/>
    </location>
</feature>
<feature type="repeat" description="PPR 12">
    <location>
        <begin position="455"/>
        <end position="489"/>
    </location>
</feature>
<dbReference type="EMBL" id="AC009519">
    <property type="protein sequence ID" value="AAF19688.1"/>
    <property type="status" value="ALT_SEQ"/>
    <property type="molecule type" value="Genomic_DNA"/>
</dbReference>
<dbReference type="EMBL" id="CP002684">
    <property type="protein sequence ID" value="AEE34256.1"/>
    <property type="molecule type" value="Genomic_DNA"/>
</dbReference>
<dbReference type="PIR" id="C96669">
    <property type="entry name" value="C96669"/>
</dbReference>
<dbReference type="RefSeq" id="NP_001185309.1">
    <property type="nucleotide sequence ID" value="NM_001198380.2"/>
</dbReference>
<dbReference type="SMR" id="P0C7R3"/>
<dbReference type="FunCoup" id="P0C7R3">
    <property type="interactions" value="69"/>
</dbReference>
<dbReference type="PaxDb" id="3702-AT1G64583.1"/>
<dbReference type="EnsemblPlants" id="AT1G64583.1">
    <property type="protein sequence ID" value="AT1G64583.1"/>
    <property type="gene ID" value="AT1G64583"/>
</dbReference>
<dbReference type="GeneID" id="10723135"/>
<dbReference type="Gramene" id="AT1G64583.1">
    <property type="protein sequence ID" value="AT1G64583.1"/>
    <property type="gene ID" value="AT1G64583"/>
</dbReference>
<dbReference type="KEGG" id="ath:AT1G64583"/>
<dbReference type="Araport" id="AT1G64583"/>
<dbReference type="TAIR" id="AT1G64583"/>
<dbReference type="eggNOG" id="KOG4197">
    <property type="taxonomic scope" value="Eukaryota"/>
</dbReference>
<dbReference type="HOGENOM" id="CLU_002706_49_0_1"/>
<dbReference type="InParanoid" id="P0C7R3"/>
<dbReference type="OMA" id="KFDTMIE"/>
<dbReference type="PRO" id="PR:P0C7R3"/>
<dbReference type="Proteomes" id="UP000006548">
    <property type="component" value="Chromosome 1"/>
</dbReference>
<dbReference type="ExpressionAtlas" id="P0C7R3">
    <property type="expression patterns" value="baseline and differential"/>
</dbReference>
<dbReference type="GO" id="GO:0005739">
    <property type="term" value="C:mitochondrion"/>
    <property type="evidence" value="ECO:0007669"/>
    <property type="project" value="UniProtKB-SubCell"/>
</dbReference>
<dbReference type="FunFam" id="1.25.40.10:FF:000558">
    <property type="entry name" value="Pentatricopeptide repeat-containing protein At5g39710"/>
    <property type="match status" value="1"/>
</dbReference>
<dbReference type="Gene3D" id="1.25.40.10">
    <property type="entry name" value="Tetratricopeptide repeat domain"/>
    <property type="match status" value="4"/>
</dbReference>
<dbReference type="InterPro" id="IPR002885">
    <property type="entry name" value="Pentatricopeptide_rpt"/>
</dbReference>
<dbReference type="InterPro" id="IPR011990">
    <property type="entry name" value="TPR-like_helical_dom_sf"/>
</dbReference>
<dbReference type="NCBIfam" id="TIGR00756">
    <property type="entry name" value="PPR"/>
    <property type="match status" value="11"/>
</dbReference>
<dbReference type="PANTHER" id="PTHR47938:SF46">
    <property type="entry name" value="PENTACOTRIPEPTIDE-REPEAT REGION OF PRORP DOMAIN-CONTAINING PROTEIN"/>
    <property type="match status" value="1"/>
</dbReference>
<dbReference type="PANTHER" id="PTHR47938">
    <property type="entry name" value="RESPIRATORY COMPLEX I CHAPERONE (CIA84), PUTATIVE (AFU_ORTHOLOGUE AFUA_2G06020)-RELATED"/>
    <property type="match status" value="1"/>
</dbReference>
<dbReference type="Pfam" id="PF12854">
    <property type="entry name" value="PPR_1"/>
    <property type="match status" value="1"/>
</dbReference>
<dbReference type="Pfam" id="PF13041">
    <property type="entry name" value="PPR_2"/>
    <property type="match status" value="5"/>
</dbReference>
<dbReference type="SUPFAM" id="SSF81901">
    <property type="entry name" value="HCP-like"/>
    <property type="match status" value="1"/>
</dbReference>
<dbReference type="SUPFAM" id="SSF48452">
    <property type="entry name" value="TPR-like"/>
    <property type="match status" value="1"/>
</dbReference>
<dbReference type="PROSITE" id="PS51375">
    <property type="entry name" value="PPR"/>
    <property type="match status" value="12"/>
</dbReference>
<name>PP106_ARATH</name>
<reference key="1">
    <citation type="journal article" date="2000" name="Nature">
        <title>Sequence and analysis of chromosome 1 of the plant Arabidopsis thaliana.</title>
        <authorList>
            <person name="Theologis A."/>
            <person name="Ecker J.R."/>
            <person name="Palm C.J."/>
            <person name="Federspiel N.A."/>
            <person name="Kaul S."/>
            <person name="White O."/>
            <person name="Alonso J."/>
            <person name="Altafi H."/>
            <person name="Araujo R."/>
            <person name="Bowman C.L."/>
            <person name="Brooks S.Y."/>
            <person name="Buehler E."/>
            <person name="Chan A."/>
            <person name="Chao Q."/>
            <person name="Chen H."/>
            <person name="Cheuk R.F."/>
            <person name="Chin C.W."/>
            <person name="Chung M.K."/>
            <person name="Conn L."/>
            <person name="Conway A.B."/>
            <person name="Conway A.R."/>
            <person name="Creasy T.H."/>
            <person name="Dewar K."/>
            <person name="Dunn P."/>
            <person name="Etgu P."/>
            <person name="Feldblyum T.V."/>
            <person name="Feng J.-D."/>
            <person name="Fong B."/>
            <person name="Fujii C.Y."/>
            <person name="Gill J.E."/>
            <person name="Goldsmith A.D."/>
            <person name="Haas B."/>
            <person name="Hansen N.F."/>
            <person name="Hughes B."/>
            <person name="Huizar L."/>
            <person name="Hunter J.L."/>
            <person name="Jenkins J."/>
            <person name="Johnson-Hopson C."/>
            <person name="Khan S."/>
            <person name="Khaykin E."/>
            <person name="Kim C.J."/>
            <person name="Koo H.L."/>
            <person name="Kremenetskaia I."/>
            <person name="Kurtz D.B."/>
            <person name="Kwan A."/>
            <person name="Lam B."/>
            <person name="Langin-Hooper S."/>
            <person name="Lee A."/>
            <person name="Lee J.M."/>
            <person name="Lenz C.A."/>
            <person name="Li J.H."/>
            <person name="Li Y.-P."/>
            <person name="Lin X."/>
            <person name="Liu S.X."/>
            <person name="Liu Z.A."/>
            <person name="Luros J.S."/>
            <person name="Maiti R."/>
            <person name="Marziali A."/>
            <person name="Militscher J."/>
            <person name="Miranda M."/>
            <person name="Nguyen M."/>
            <person name="Nierman W.C."/>
            <person name="Osborne B.I."/>
            <person name="Pai G."/>
            <person name="Peterson J."/>
            <person name="Pham P.K."/>
            <person name="Rizzo M."/>
            <person name="Rooney T."/>
            <person name="Rowley D."/>
            <person name="Sakano H."/>
            <person name="Salzberg S.L."/>
            <person name="Schwartz J.R."/>
            <person name="Shinn P."/>
            <person name="Southwick A.M."/>
            <person name="Sun H."/>
            <person name="Tallon L.J."/>
            <person name="Tambunga G."/>
            <person name="Toriumi M.J."/>
            <person name="Town C.D."/>
            <person name="Utterback T."/>
            <person name="Van Aken S."/>
            <person name="Vaysberg M."/>
            <person name="Vysotskaia V.S."/>
            <person name="Walker M."/>
            <person name="Wu D."/>
            <person name="Yu G."/>
            <person name="Fraser C.M."/>
            <person name="Venter J.C."/>
            <person name="Davis R.W."/>
        </authorList>
    </citation>
    <scope>NUCLEOTIDE SEQUENCE [LARGE SCALE GENOMIC DNA]</scope>
    <source>
        <strain>cv. Columbia</strain>
    </source>
</reference>
<reference key="2">
    <citation type="journal article" date="2017" name="Plant J.">
        <title>Araport11: a complete reannotation of the Arabidopsis thaliana reference genome.</title>
        <authorList>
            <person name="Cheng C.Y."/>
            <person name="Krishnakumar V."/>
            <person name="Chan A.P."/>
            <person name="Thibaud-Nissen F."/>
            <person name="Schobel S."/>
            <person name="Town C.D."/>
        </authorList>
    </citation>
    <scope>GENOME REANNOTATION</scope>
    <source>
        <strain>cv. Columbia</strain>
    </source>
</reference>
<reference key="3">
    <citation type="journal article" date="2004" name="Plant Cell">
        <title>Genome-wide analysis of Arabidopsis pentatricopeptide repeat proteins reveals their essential role in organelle biogenesis.</title>
        <authorList>
            <person name="Lurin C."/>
            <person name="Andres C."/>
            <person name="Aubourg S."/>
            <person name="Bellaoui M."/>
            <person name="Bitton F."/>
            <person name="Bruyere C."/>
            <person name="Caboche M."/>
            <person name="Debast C."/>
            <person name="Gualberto J."/>
            <person name="Hoffmann B."/>
            <person name="Lecharny A."/>
            <person name="Le Ret M."/>
            <person name="Martin-Magniette M.-L."/>
            <person name="Mireau H."/>
            <person name="Peeters N."/>
            <person name="Renou J.-P."/>
            <person name="Szurek B."/>
            <person name="Taconnat L."/>
            <person name="Small I."/>
        </authorList>
    </citation>
    <scope>GENE FAMILY</scope>
</reference>
<keyword id="KW-0496">Mitochondrion</keyword>
<keyword id="KW-1185">Reference proteome</keyword>
<keyword id="KW-0677">Repeat</keyword>
<keyword id="KW-0809">Transit peptide</keyword>
<organism>
    <name type="scientific">Arabidopsis thaliana</name>
    <name type="common">Mouse-ear cress</name>
    <dbReference type="NCBI Taxonomy" id="3702"/>
    <lineage>
        <taxon>Eukaryota</taxon>
        <taxon>Viridiplantae</taxon>
        <taxon>Streptophyta</taxon>
        <taxon>Embryophyta</taxon>
        <taxon>Tracheophyta</taxon>
        <taxon>Spermatophyta</taxon>
        <taxon>Magnoliopsida</taxon>
        <taxon>eudicotyledons</taxon>
        <taxon>Gunneridae</taxon>
        <taxon>Pentapetalae</taxon>
        <taxon>rosids</taxon>
        <taxon>malvids</taxon>
        <taxon>Brassicales</taxon>
        <taxon>Brassicaceae</taxon>
        <taxon>Camelineae</taxon>
        <taxon>Arabidopsis</taxon>
    </lineage>
</organism>
<protein>
    <recommendedName>
        <fullName>Pentatricopeptide repeat-containing protein At1g64583, mitochondrial</fullName>
    </recommendedName>
</protein>
<accession>P0C7R3</accession>
<accession>Q9SGV7</accession>
<sequence>MRRLIVTGIATSTAKGFRRVVNPNLLGGGAAARAFSDYREKLRTGFLHSIRFEDAFALFFEMVHSQPLPSIVDFTRLLTATANLRRYETVIYFSQKMELYGISHDLYSFTILIHCFCRCSRLSFALSVLGKMMKLGYEPSIVTFGSLLHGFCLVNRIGDAFSLVILMVKSGYEPNVVVYNTLIDGLCKNGELNIALELLNEMEKKGLGADVVTYNTLLTGLCYSGRWSDAARMLRDMMKRSINPDVVTFTALIDVFVKQGNLDEAQELYKEMIQSSVDPNNVTYNSIINGLCMHGRLYDAKKTFDLMASKGCFPNVVTYNTLISGFCKFRMVDEGMKLFQRMSCEGFNADIFTYNTLIHGYCQVGKLRVALDIFCWMVSRRVTPDIITHCILLHGLCVNGEIESALVKFDDMRESEKYIGIVAYNIMIHGLCKADKVEKAWELFCRLPVEGVKPDARTYTIMILGLCKNGPRREADELIRRMKEEGIICQMNAEDDHLEEHSSSNKEISLVS</sequence>
<proteinExistence type="evidence at transcript level"/>